<reference key="1">
    <citation type="journal article" date="2004" name="J. Mol. Evol.">
        <title>Comparative analysis of the complete plastid genome sequence of the red alga Gracilaria tenuistipitata var. liui provides insights into the evolution of rhodoplasts and their relationship to other plastids.</title>
        <authorList>
            <person name="Hagopian J.C."/>
            <person name="Reis M."/>
            <person name="Kitajima J.P."/>
            <person name="Bhattacharya D."/>
            <person name="de Oliveira M.C."/>
        </authorList>
    </citation>
    <scope>NUCLEOTIDE SEQUENCE [LARGE SCALE GENOMIC DNA]</scope>
</reference>
<feature type="chain" id="PRO_0000200311" description="Cytochrome b559 subunit alpha">
    <location>
        <begin position="1"/>
        <end position="84"/>
    </location>
</feature>
<feature type="transmembrane region" description="Helical" evidence="1">
    <location>
        <begin position="22"/>
        <end position="36"/>
    </location>
</feature>
<feature type="binding site" description="axial binding residue" evidence="1">
    <location>
        <position position="24"/>
    </location>
    <ligand>
        <name>heme</name>
        <dbReference type="ChEBI" id="CHEBI:30413"/>
        <note>ligand shared with beta subunit</note>
    </ligand>
    <ligandPart>
        <name>Fe</name>
        <dbReference type="ChEBI" id="CHEBI:18248"/>
    </ligandPart>
</feature>
<organism>
    <name type="scientific">Gracilaria tenuistipitata var. liui</name>
    <name type="common">Red alga</name>
    <dbReference type="NCBI Taxonomy" id="285951"/>
    <lineage>
        <taxon>Eukaryota</taxon>
        <taxon>Rhodophyta</taxon>
        <taxon>Florideophyceae</taxon>
        <taxon>Rhodymeniophycidae</taxon>
        <taxon>Gracilariales</taxon>
        <taxon>Gracilariaceae</taxon>
        <taxon>Gracilaria</taxon>
        <taxon>Gracilaria tenuistipitata</taxon>
    </lineage>
</organism>
<proteinExistence type="inferred from homology"/>
<geneLocation type="chloroplast"/>
<gene>
    <name evidence="1" type="primary">psbE</name>
    <name type="ordered locus">Grc000200</name>
</gene>
<dbReference type="EMBL" id="AY673996">
    <property type="protein sequence ID" value="AAT79781.1"/>
    <property type="molecule type" value="Genomic_DNA"/>
</dbReference>
<dbReference type="RefSeq" id="YP_063706.1">
    <property type="nucleotide sequence ID" value="NC_006137.1"/>
</dbReference>
<dbReference type="SMR" id="Q6B8K4"/>
<dbReference type="GeneID" id="2943955"/>
<dbReference type="GO" id="GO:0009535">
    <property type="term" value="C:chloroplast thylakoid membrane"/>
    <property type="evidence" value="ECO:0007669"/>
    <property type="project" value="UniProtKB-SubCell"/>
</dbReference>
<dbReference type="GO" id="GO:0009539">
    <property type="term" value="C:photosystem II reaction center"/>
    <property type="evidence" value="ECO:0007669"/>
    <property type="project" value="InterPro"/>
</dbReference>
<dbReference type="GO" id="GO:0009055">
    <property type="term" value="F:electron transfer activity"/>
    <property type="evidence" value="ECO:0007669"/>
    <property type="project" value="UniProtKB-UniRule"/>
</dbReference>
<dbReference type="GO" id="GO:0020037">
    <property type="term" value="F:heme binding"/>
    <property type="evidence" value="ECO:0007669"/>
    <property type="project" value="InterPro"/>
</dbReference>
<dbReference type="GO" id="GO:0005506">
    <property type="term" value="F:iron ion binding"/>
    <property type="evidence" value="ECO:0007669"/>
    <property type="project" value="UniProtKB-UniRule"/>
</dbReference>
<dbReference type="GO" id="GO:0009767">
    <property type="term" value="P:photosynthetic electron transport chain"/>
    <property type="evidence" value="ECO:0007669"/>
    <property type="project" value="InterPro"/>
</dbReference>
<dbReference type="Gene3D" id="1.20.5.860">
    <property type="entry name" value="Photosystem II cytochrome b559, alpha subunit"/>
    <property type="match status" value="1"/>
</dbReference>
<dbReference type="HAMAP" id="MF_00642">
    <property type="entry name" value="PSII_PsbE"/>
    <property type="match status" value="1"/>
</dbReference>
<dbReference type="InterPro" id="IPR006217">
    <property type="entry name" value="PSII_cyt_b559_asu"/>
</dbReference>
<dbReference type="InterPro" id="IPR037025">
    <property type="entry name" value="PSII_cyt_b559_asu_sf"/>
</dbReference>
<dbReference type="InterPro" id="IPR006216">
    <property type="entry name" value="PSII_cyt_b559_CS"/>
</dbReference>
<dbReference type="InterPro" id="IPR013081">
    <property type="entry name" value="PSII_cyt_b559_N"/>
</dbReference>
<dbReference type="InterPro" id="IPR013082">
    <property type="entry name" value="PSII_cytb559_asu_lum"/>
</dbReference>
<dbReference type="NCBIfam" id="TIGR01332">
    <property type="entry name" value="cyt_b559_alpha"/>
    <property type="match status" value="1"/>
</dbReference>
<dbReference type="PANTHER" id="PTHR33391">
    <property type="entry name" value="CYTOCHROME B559 SUBUNIT BETA-RELATED"/>
    <property type="match status" value="1"/>
</dbReference>
<dbReference type="PANTHER" id="PTHR33391:SF9">
    <property type="entry name" value="CYTOCHROME B559 SUBUNIT BETA-RELATED"/>
    <property type="match status" value="1"/>
</dbReference>
<dbReference type="Pfam" id="PF00283">
    <property type="entry name" value="Cytochrom_B559"/>
    <property type="match status" value="1"/>
</dbReference>
<dbReference type="Pfam" id="PF00284">
    <property type="entry name" value="Cytochrom_B559a"/>
    <property type="match status" value="1"/>
</dbReference>
<dbReference type="PIRSF" id="PIRSF000036">
    <property type="entry name" value="PsbE"/>
    <property type="match status" value="1"/>
</dbReference>
<dbReference type="SUPFAM" id="SSF161045">
    <property type="entry name" value="Cytochrome b559 subunits"/>
    <property type="match status" value="1"/>
</dbReference>
<dbReference type="PROSITE" id="PS00537">
    <property type="entry name" value="CYTOCHROME_B559"/>
    <property type="match status" value="1"/>
</dbReference>
<protein>
    <recommendedName>
        <fullName evidence="1">Cytochrome b559 subunit alpha</fullName>
    </recommendedName>
    <alternativeName>
        <fullName evidence="1">PSII reaction center subunit V</fullName>
    </alternativeName>
</protein>
<keyword id="KW-0150">Chloroplast</keyword>
<keyword id="KW-0249">Electron transport</keyword>
<keyword id="KW-0349">Heme</keyword>
<keyword id="KW-0408">Iron</keyword>
<keyword id="KW-0472">Membrane</keyword>
<keyword id="KW-0479">Metal-binding</keyword>
<keyword id="KW-0602">Photosynthesis</keyword>
<keyword id="KW-0604">Photosystem II</keyword>
<keyword id="KW-0934">Plastid</keyword>
<keyword id="KW-0793">Thylakoid</keyword>
<keyword id="KW-0812">Transmembrane</keyword>
<keyword id="KW-1133">Transmembrane helix</keyword>
<keyword id="KW-0813">Transport</keyword>
<accession>Q6B8K4</accession>
<sequence>MSGGSTGERPFSDIITSIRYWVIHSITIPSLFVAGWLFVSTGLAYDVFGTPRPNEYFTQDRQQVPLVNDRFSAKQELEDLTKGI</sequence>
<name>PSBE_GRATL</name>
<evidence type="ECO:0000255" key="1">
    <source>
        <dbReference type="HAMAP-Rule" id="MF_00642"/>
    </source>
</evidence>
<comment type="function">
    <text evidence="1">This b-type cytochrome is tightly associated with the reaction center of photosystem II (PSII). PSII is a light-driven water:plastoquinone oxidoreductase that uses light energy to abstract electrons from H(2)O, generating O(2) and a proton gradient subsequently used for ATP formation. It consists of a core antenna complex that captures photons, and an electron transfer chain that converts photonic excitation into a charge separation.</text>
</comment>
<comment type="cofactor">
    <cofactor evidence="1">
        <name>heme b</name>
        <dbReference type="ChEBI" id="CHEBI:60344"/>
    </cofactor>
    <text evidence="1">With its partner (PsbF) binds heme. PSII binds additional chlorophylls, carotenoids and specific lipids.</text>
</comment>
<comment type="subunit">
    <text evidence="1">Heterodimer of an alpha subunit and a beta subunit. PSII is composed of 1 copy each of membrane proteins PsbA, PsbB, PsbC, PsbD, PsbE, PsbF, PsbH, PsbI, PsbJ, PsbK, PsbL, PsbM, PsbT, PsbX, PsbY, PsbZ, Psb30/Ycf12, at least 3 peripheral proteins of the oxygen-evolving complex and a large number of cofactors. It forms dimeric complexes.</text>
</comment>
<comment type="subcellular location">
    <subcellularLocation>
        <location evidence="1">Plastid</location>
        <location evidence="1">Chloroplast thylakoid membrane</location>
        <topology evidence="1">Single-pass membrane protein</topology>
    </subcellularLocation>
</comment>
<comment type="similarity">
    <text evidence="1">Belongs to the PsbE/PsbF family.</text>
</comment>